<feature type="chain" id="PRO_0000135186" description="Signal recognition particle 9 kDa protein">
    <location>
        <begin position="1"/>
        <end position="103"/>
    </location>
</feature>
<feature type="region of interest" description="Disordered" evidence="4">
    <location>
        <begin position="81"/>
        <end position="103"/>
    </location>
</feature>
<organism>
    <name type="scientific">Arabidopsis thaliana</name>
    <name type="common">Mouse-ear cress</name>
    <dbReference type="NCBI Taxonomy" id="3702"/>
    <lineage>
        <taxon>Eukaryota</taxon>
        <taxon>Viridiplantae</taxon>
        <taxon>Streptophyta</taxon>
        <taxon>Embryophyta</taxon>
        <taxon>Tracheophyta</taxon>
        <taxon>Spermatophyta</taxon>
        <taxon>Magnoliopsida</taxon>
        <taxon>eudicotyledons</taxon>
        <taxon>Gunneridae</taxon>
        <taxon>Pentapetalae</taxon>
        <taxon>rosids</taxon>
        <taxon>malvids</taxon>
        <taxon>Brassicales</taxon>
        <taxon>Brassicaceae</taxon>
        <taxon>Camelineae</taxon>
        <taxon>Arabidopsis</taxon>
    </lineage>
</organism>
<comment type="function">
    <text evidence="2">Component of the signal recognition particle (SRP) complex, a ribonucleoprotein complex that mediates the cotranslational targeting of secretory and membrane proteins to the endoplasmic reticulum (ER) (By similarity). SRP9 together with SRP14 and the Alu portion of the SRP RNA, constitutes the elongation arrest domain of SRP (By similarity). The complex of SRP9 and SRP14 is required for SRP RNA binding (By similarity).</text>
</comment>
<comment type="subunit">
    <text evidence="2 3">Heterodimer with SRP14; binds RNA as heterodimer (By similarity). Component of a signal recognition particle complex that consists of a 7SL RNA molecule and six protein subunits: srp72, srp68, srp54, srp19, srp14 and srp9 (By similarity).</text>
</comment>
<comment type="subcellular location">
    <subcellularLocation>
        <location evidence="1">Cytoplasm</location>
    </subcellularLocation>
</comment>
<comment type="similarity">
    <text evidence="5">Belongs to the SRP9 family.</text>
</comment>
<evidence type="ECO:0000250" key="1"/>
<evidence type="ECO:0000250" key="2">
    <source>
        <dbReference type="UniProtKB" id="P21262"/>
    </source>
</evidence>
<evidence type="ECO:0000250" key="3">
    <source>
        <dbReference type="UniProtKB" id="P49458"/>
    </source>
</evidence>
<evidence type="ECO:0000256" key="4">
    <source>
        <dbReference type="SAM" id="MobiDB-lite"/>
    </source>
</evidence>
<evidence type="ECO:0000305" key="5"/>
<accession>Q9SMU7</accession>
<reference key="1">
    <citation type="journal article" date="2000" name="Nature">
        <title>Sequence and analysis of chromosome 3 of the plant Arabidopsis thaliana.</title>
        <authorList>
            <person name="Salanoubat M."/>
            <person name="Lemcke K."/>
            <person name="Rieger M."/>
            <person name="Ansorge W."/>
            <person name="Unseld M."/>
            <person name="Fartmann B."/>
            <person name="Valle G."/>
            <person name="Bloecker H."/>
            <person name="Perez-Alonso M."/>
            <person name="Obermaier B."/>
            <person name="Delseny M."/>
            <person name="Boutry M."/>
            <person name="Grivell L.A."/>
            <person name="Mache R."/>
            <person name="Puigdomenech P."/>
            <person name="De Simone V."/>
            <person name="Choisne N."/>
            <person name="Artiguenave F."/>
            <person name="Robert C."/>
            <person name="Brottier P."/>
            <person name="Wincker P."/>
            <person name="Cattolico L."/>
            <person name="Weissenbach J."/>
            <person name="Saurin W."/>
            <person name="Quetier F."/>
            <person name="Schaefer M."/>
            <person name="Mueller-Auer S."/>
            <person name="Gabel C."/>
            <person name="Fuchs M."/>
            <person name="Benes V."/>
            <person name="Wurmbach E."/>
            <person name="Drzonek H."/>
            <person name="Erfle H."/>
            <person name="Jordan N."/>
            <person name="Bangert S."/>
            <person name="Wiedelmann R."/>
            <person name="Kranz H."/>
            <person name="Voss H."/>
            <person name="Holland R."/>
            <person name="Brandt P."/>
            <person name="Nyakatura G."/>
            <person name="Vezzi A."/>
            <person name="D'Angelo M."/>
            <person name="Pallavicini A."/>
            <person name="Toppo S."/>
            <person name="Simionati B."/>
            <person name="Conrad A."/>
            <person name="Hornischer K."/>
            <person name="Kauer G."/>
            <person name="Loehnert T.-H."/>
            <person name="Nordsiek G."/>
            <person name="Reichelt J."/>
            <person name="Scharfe M."/>
            <person name="Schoen O."/>
            <person name="Bargues M."/>
            <person name="Terol J."/>
            <person name="Climent J."/>
            <person name="Navarro P."/>
            <person name="Collado C."/>
            <person name="Perez-Perez A."/>
            <person name="Ottenwaelder B."/>
            <person name="Duchemin D."/>
            <person name="Cooke R."/>
            <person name="Laudie M."/>
            <person name="Berger-Llauro C."/>
            <person name="Purnelle B."/>
            <person name="Masuy D."/>
            <person name="de Haan M."/>
            <person name="Maarse A.C."/>
            <person name="Alcaraz J.-P."/>
            <person name="Cottet A."/>
            <person name="Casacuberta E."/>
            <person name="Monfort A."/>
            <person name="Argiriou A."/>
            <person name="Flores M."/>
            <person name="Liguori R."/>
            <person name="Vitale D."/>
            <person name="Mannhaupt G."/>
            <person name="Haase D."/>
            <person name="Schoof H."/>
            <person name="Rudd S."/>
            <person name="Zaccaria P."/>
            <person name="Mewes H.-W."/>
            <person name="Mayer K.F.X."/>
            <person name="Kaul S."/>
            <person name="Town C.D."/>
            <person name="Koo H.L."/>
            <person name="Tallon L.J."/>
            <person name="Jenkins J."/>
            <person name="Rooney T."/>
            <person name="Rizzo M."/>
            <person name="Walts A."/>
            <person name="Utterback T."/>
            <person name="Fujii C.Y."/>
            <person name="Shea T.P."/>
            <person name="Creasy T.H."/>
            <person name="Haas B."/>
            <person name="Maiti R."/>
            <person name="Wu D."/>
            <person name="Peterson J."/>
            <person name="Van Aken S."/>
            <person name="Pai G."/>
            <person name="Militscher J."/>
            <person name="Sellers P."/>
            <person name="Gill J.E."/>
            <person name="Feldblyum T.V."/>
            <person name="Preuss D."/>
            <person name="Lin X."/>
            <person name="Nierman W.C."/>
            <person name="Salzberg S.L."/>
            <person name="White O."/>
            <person name="Venter J.C."/>
            <person name="Fraser C.M."/>
            <person name="Kaneko T."/>
            <person name="Nakamura Y."/>
            <person name="Sato S."/>
            <person name="Kato T."/>
            <person name="Asamizu E."/>
            <person name="Sasamoto S."/>
            <person name="Kimura T."/>
            <person name="Idesawa K."/>
            <person name="Kawashima K."/>
            <person name="Kishida Y."/>
            <person name="Kiyokawa C."/>
            <person name="Kohara M."/>
            <person name="Matsumoto M."/>
            <person name="Matsuno A."/>
            <person name="Muraki A."/>
            <person name="Nakayama S."/>
            <person name="Nakazaki N."/>
            <person name="Shinpo S."/>
            <person name="Takeuchi C."/>
            <person name="Wada T."/>
            <person name="Watanabe A."/>
            <person name="Yamada M."/>
            <person name="Yasuda M."/>
            <person name="Tabata S."/>
        </authorList>
    </citation>
    <scope>NUCLEOTIDE SEQUENCE [LARGE SCALE GENOMIC DNA]</scope>
    <source>
        <strain>cv. Columbia</strain>
    </source>
</reference>
<reference key="2">
    <citation type="journal article" date="2017" name="Plant J.">
        <title>Araport11: a complete reannotation of the Arabidopsis thaliana reference genome.</title>
        <authorList>
            <person name="Cheng C.Y."/>
            <person name="Krishnakumar V."/>
            <person name="Chan A.P."/>
            <person name="Thibaud-Nissen F."/>
            <person name="Schobel S."/>
            <person name="Town C.D."/>
        </authorList>
    </citation>
    <scope>GENOME REANNOTATION</scope>
    <source>
        <strain>cv. Columbia</strain>
    </source>
</reference>
<reference key="3">
    <citation type="journal article" date="2003" name="Science">
        <title>Empirical analysis of transcriptional activity in the Arabidopsis genome.</title>
        <authorList>
            <person name="Yamada K."/>
            <person name="Lim J."/>
            <person name="Dale J.M."/>
            <person name="Chen H."/>
            <person name="Shinn P."/>
            <person name="Palm C.J."/>
            <person name="Southwick A.M."/>
            <person name="Wu H.C."/>
            <person name="Kim C.J."/>
            <person name="Nguyen M."/>
            <person name="Pham P.K."/>
            <person name="Cheuk R.F."/>
            <person name="Karlin-Newmann G."/>
            <person name="Liu S.X."/>
            <person name="Lam B."/>
            <person name="Sakano H."/>
            <person name="Wu T."/>
            <person name="Yu G."/>
            <person name="Miranda M."/>
            <person name="Quach H.L."/>
            <person name="Tripp M."/>
            <person name="Chang C.H."/>
            <person name="Lee J.M."/>
            <person name="Toriumi M.J."/>
            <person name="Chan M.M."/>
            <person name="Tang C.C."/>
            <person name="Onodera C.S."/>
            <person name="Deng J.M."/>
            <person name="Akiyama K."/>
            <person name="Ansari Y."/>
            <person name="Arakawa T."/>
            <person name="Banh J."/>
            <person name="Banno F."/>
            <person name="Bowser L."/>
            <person name="Brooks S.Y."/>
            <person name="Carninci P."/>
            <person name="Chao Q."/>
            <person name="Choy N."/>
            <person name="Enju A."/>
            <person name="Goldsmith A.D."/>
            <person name="Gurjal M."/>
            <person name="Hansen N.F."/>
            <person name="Hayashizaki Y."/>
            <person name="Johnson-Hopson C."/>
            <person name="Hsuan V.W."/>
            <person name="Iida K."/>
            <person name="Karnes M."/>
            <person name="Khan S."/>
            <person name="Koesema E."/>
            <person name="Ishida J."/>
            <person name="Jiang P.X."/>
            <person name="Jones T."/>
            <person name="Kawai J."/>
            <person name="Kamiya A."/>
            <person name="Meyers C."/>
            <person name="Nakajima M."/>
            <person name="Narusaka M."/>
            <person name="Seki M."/>
            <person name="Sakurai T."/>
            <person name="Satou M."/>
            <person name="Tamse R."/>
            <person name="Vaysberg M."/>
            <person name="Wallender E.K."/>
            <person name="Wong C."/>
            <person name="Yamamura Y."/>
            <person name="Yuan S."/>
            <person name="Shinozaki K."/>
            <person name="Davis R.W."/>
            <person name="Theologis A."/>
            <person name="Ecker J.R."/>
        </authorList>
    </citation>
    <scope>NUCLEOTIDE SEQUENCE [LARGE SCALE MRNA]</scope>
    <source>
        <strain>cv. Columbia</strain>
    </source>
</reference>
<reference key="4">
    <citation type="submission" date="2002-03" db="EMBL/GenBank/DDBJ databases">
        <title>Full-length cDNA from Arabidopsis thaliana.</title>
        <authorList>
            <person name="Brover V.V."/>
            <person name="Troukhan M.E."/>
            <person name="Alexandrov N.A."/>
            <person name="Lu Y.-P."/>
            <person name="Flavell R.B."/>
            <person name="Feldmann K.A."/>
        </authorList>
    </citation>
    <scope>NUCLEOTIDE SEQUENCE [LARGE SCALE MRNA]</scope>
</reference>
<protein>
    <recommendedName>
        <fullName>Signal recognition particle 9 kDa protein</fullName>
        <shortName>SRP9</shortName>
    </recommendedName>
</protein>
<sequence>MVYIASWDEFVDRSVQLFRADPESTRYVMKYRHCDGKLVLKVTDNKECLKFKTDQAQEAKKMEKLNNIFFTLMARGPDVDLSEVTGKEQMETQPAKKGRGRKQ</sequence>
<dbReference type="EMBL" id="AL132967">
    <property type="protein sequence ID" value="CAB62000.1"/>
    <property type="molecule type" value="Genomic_DNA"/>
</dbReference>
<dbReference type="EMBL" id="CP002686">
    <property type="protein sequence ID" value="AEE78498.1"/>
    <property type="molecule type" value="Genomic_DNA"/>
</dbReference>
<dbReference type="EMBL" id="CP002686">
    <property type="protein sequence ID" value="ANM65982.1"/>
    <property type="molecule type" value="Genomic_DNA"/>
</dbReference>
<dbReference type="EMBL" id="BT004743">
    <property type="protein sequence ID" value="AAO44009.1"/>
    <property type="molecule type" value="mRNA"/>
</dbReference>
<dbReference type="EMBL" id="AY085335">
    <property type="protein sequence ID" value="AAM62566.1"/>
    <property type="molecule type" value="mRNA"/>
</dbReference>
<dbReference type="PIR" id="T46120">
    <property type="entry name" value="T46120"/>
</dbReference>
<dbReference type="RefSeq" id="NP_001327913.1">
    <property type="nucleotide sequence ID" value="NM_001339398.1"/>
</dbReference>
<dbReference type="RefSeq" id="NP_190479.1">
    <property type="nucleotide sequence ID" value="NM_114769.4"/>
</dbReference>
<dbReference type="SMR" id="Q9SMU7"/>
<dbReference type="BioGRID" id="9389">
    <property type="interactions" value="5"/>
</dbReference>
<dbReference type="FunCoup" id="Q9SMU7">
    <property type="interactions" value="3333"/>
</dbReference>
<dbReference type="IntAct" id="Q9SMU7">
    <property type="interactions" value="5"/>
</dbReference>
<dbReference type="STRING" id="3702.Q9SMU7"/>
<dbReference type="PaxDb" id="3702-AT3G49100.1"/>
<dbReference type="ProteomicsDB" id="226735"/>
<dbReference type="EnsemblPlants" id="AT3G49100.1">
    <property type="protein sequence ID" value="AT3G49100.1"/>
    <property type="gene ID" value="AT3G49100"/>
</dbReference>
<dbReference type="EnsemblPlants" id="AT3G49100.2">
    <property type="protein sequence ID" value="AT3G49100.2"/>
    <property type="gene ID" value="AT3G49100"/>
</dbReference>
<dbReference type="GeneID" id="824071"/>
<dbReference type="Gramene" id="AT3G49100.1">
    <property type="protein sequence ID" value="AT3G49100.1"/>
    <property type="gene ID" value="AT3G49100"/>
</dbReference>
<dbReference type="Gramene" id="AT3G49100.2">
    <property type="protein sequence ID" value="AT3G49100.2"/>
    <property type="gene ID" value="AT3G49100"/>
</dbReference>
<dbReference type="KEGG" id="ath:AT3G49100"/>
<dbReference type="Araport" id="AT3G49100"/>
<dbReference type="TAIR" id="AT3G49100"/>
<dbReference type="eggNOG" id="KOG3465">
    <property type="taxonomic scope" value="Eukaryota"/>
</dbReference>
<dbReference type="HOGENOM" id="CLU_144337_2_0_1"/>
<dbReference type="InParanoid" id="Q9SMU7"/>
<dbReference type="OMA" id="DPMKVRF"/>
<dbReference type="OrthoDB" id="360923at2759"/>
<dbReference type="PhylomeDB" id="Q9SMU7"/>
<dbReference type="PRO" id="PR:Q9SMU7"/>
<dbReference type="Proteomes" id="UP000006548">
    <property type="component" value="Chromosome 3"/>
</dbReference>
<dbReference type="ExpressionAtlas" id="Q9SMU7">
    <property type="expression patterns" value="baseline and differential"/>
</dbReference>
<dbReference type="GO" id="GO:0005829">
    <property type="term" value="C:cytosol"/>
    <property type="evidence" value="ECO:0007005"/>
    <property type="project" value="TAIR"/>
</dbReference>
<dbReference type="GO" id="GO:0005786">
    <property type="term" value="C:signal recognition particle, endoplasmic reticulum targeting"/>
    <property type="evidence" value="ECO:0007669"/>
    <property type="project" value="UniProtKB-KW"/>
</dbReference>
<dbReference type="GO" id="GO:0008312">
    <property type="term" value="F:7S RNA binding"/>
    <property type="evidence" value="ECO:0007669"/>
    <property type="project" value="InterPro"/>
</dbReference>
<dbReference type="GO" id="GO:0045900">
    <property type="term" value="P:negative regulation of translational elongation"/>
    <property type="evidence" value="ECO:0007669"/>
    <property type="project" value="InterPro"/>
</dbReference>
<dbReference type="GO" id="GO:0006614">
    <property type="term" value="P:SRP-dependent cotranslational protein targeting to membrane"/>
    <property type="evidence" value="ECO:0007669"/>
    <property type="project" value="InterPro"/>
</dbReference>
<dbReference type="FunFam" id="3.30.720.10:FF:000001">
    <property type="entry name" value="Signal recognition particle 9 kDa protein"/>
    <property type="match status" value="1"/>
</dbReference>
<dbReference type="Gene3D" id="3.30.720.10">
    <property type="entry name" value="Signal recognition particle alu RNA binding heterodimer, srp9/1"/>
    <property type="match status" value="1"/>
</dbReference>
<dbReference type="InterPro" id="IPR009018">
    <property type="entry name" value="Signal_recog_particle_SRP9/14"/>
</dbReference>
<dbReference type="InterPro" id="IPR008832">
    <property type="entry name" value="SRP9"/>
</dbReference>
<dbReference type="InterPro" id="IPR039914">
    <property type="entry name" value="SRP9-like"/>
</dbReference>
<dbReference type="InterPro" id="IPR039432">
    <property type="entry name" value="SRP9_dom"/>
</dbReference>
<dbReference type="PANTHER" id="PTHR12834">
    <property type="entry name" value="SIGNAL RECOGNITION PARTICLE 9 KDA PROTEIN"/>
    <property type="match status" value="1"/>
</dbReference>
<dbReference type="PANTHER" id="PTHR12834:SF12">
    <property type="entry name" value="SIGNAL RECOGNITION PARTICLE 9 KDA PROTEIN"/>
    <property type="match status" value="1"/>
</dbReference>
<dbReference type="Pfam" id="PF05486">
    <property type="entry name" value="SRP9-21"/>
    <property type="match status" value="1"/>
</dbReference>
<dbReference type="PIRSF" id="PIRSF017029">
    <property type="entry name" value="Signal_recog_particle_SRP9"/>
    <property type="match status" value="1"/>
</dbReference>
<dbReference type="SUPFAM" id="SSF54762">
    <property type="entry name" value="Signal recognition particle alu RNA binding heterodimer, SRP9/14"/>
    <property type="match status" value="1"/>
</dbReference>
<gene>
    <name type="primary">SRP9</name>
    <name type="ordered locus">At3g49100</name>
    <name type="ORF">T2J13.60</name>
</gene>
<name>SRP09_ARATH</name>
<keyword id="KW-0963">Cytoplasm</keyword>
<keyword id="KW-1185">Reference proteome</keyword>
<keyword id="KW-0687">Ribonucleoprotein</keyword>
<keyword id="KW-0694">RNA-binding</keyword>
<keyword id="KW-0733">Signal recognition particle</keyword>
<proteinExistence type="inferred from homology"/>